<keyword id="KW-0056">Arginine metabolism</keyword>
<keyword id="KW-0378">Hydrolase</keyword>
<keyword id="KW-0479">Metal-binding</keyword>
<keyword id="KW-0862">Zinc</keyword>
<name>ASTE_ECOL5</name>
<comment type="function">
    <text evidence="1">Transforms N(2)-succinylglutamate into succinate and glutamate.</text>
</comment>
<comment type="catalytic activity">
    <reaction evidence="1">
        <text>N-succinyl-L-glutamate + H2O = L-glutamate + succinate</text>
        <dbReference type="Rhea" id="RHEA:15169"/>
        <dbReference type="ChEBI" id="CHEBI:15377"/>
        <dbReference type="ChEBI" id="CHEBI:29985"/>
        <dbReference type="ChEBI" id="CHEBI:30031"/>
        <dbReference type="ChEBI" id="CHEBI:58763"/>
        <dbReference type="EC" id="3.5.1.96"/>
    </reaction>
</comment>
<comment type="cofactor">
    <cofactor evidence="1">
        <name>Zn(2+)</name>
        <dbReference type="ChEBI" id="CHEBI:29105"/>
    </cofactor>
    <text evidence="1">Binds 1 zinc ion per subunit.</text>
</comment>
<comment type="pathway">
    <text evidence="1">Amino-acid degradation; L-arginine degradation via AST pathway; L-glutamate and succinate from L-arginine: step 5/5.</text>
</comment>
<comment type="similarity">
    <text evidence="1">Belongs to the AspA/AstE family. Succinylglutamate desuccinylase subfamily.</text>
</comment>
<proteinExistence type="inferred from homology"/>
<feature type="chain" id="PRO_0000257712" description="Succinylglutamate desuccinylase">
    <location>
        <begin position="1"/>
        <end position="322"/>
    </location>
</feature>
<feature type="active site" evidence="1">
    <location>
        <position position="210"/>
    </location>
</feature>
<feature type="binding site" evidence="1">
    <location>
        <position position="53"/>
    </location>
    <ligand>
        <name>Zn(2+)</name>
        <dbReference type="ChEBI" id="CHEBI:29105"/>
    </ligand>
</feature>
<feature type="binding site" evidence="1">
    <location>
        <position position="56"/>
    </location>
    <ligand>
        <name>Zn(2+)</name>
        <dbReference type="ChEBI" id="CHEBI:29105"/>
    </ligand>
</feature>
<feature type="binding site" evidence="1">
    <location>
        <position position="147"/>
    </location>
    <ligand>
        <name>Zn(2+)</name>
        <dbReference type="ChEBI" id="CHEBI:29105"/>
    </ligand>
</feature>
<accession>Q0TH86</accession>
<reference key="1">
    <citation type="journal article" date="2006" name="Mol. Microbiol.">
        <title>Role of pathogenicity island-associated integrases in the genome plasticity of uropathogenic Escherichia coli strain 536.</title>
        <authorList>
            <person name="Hochhut B."/>
            <person name="Wilde C."/>
            <person name="Balling G."/>
            <person name="Middendorf B."/>
            <person name="Dobrindt U."/>
            <person name="Brzuszkiewicz E."/>
            <person name="Gottschalk G."/>
            <person name="Carniel E."/>
            <person name="Hacker J."/>
        </authorList>
    </citation>
    <scope>NUCLEOTIDE SEQUENCE [LARGE SCALE GENOMIC DNA]</scope>
    <source>
        <strain>536 / UPEC</strain>
    </source>
</reference>
<organism>
    <name type="scientific">Escherichia coli O6:K15:H31 (strain 536 / UPEC)</name>
    <dbReference type="NCBI Taxonomy" id="362663"/>
    <lineage>
        <taxon>Bacteria</taxon>
        <taxon>Pseudomonadati</taxon>
        <taxon>Pseudomonadota</taxon>
        <taxon>Gammaproteobacteria</taxon>
        <taxon>Enterobacterales</taxon>
        <taxon>Enterobacteriaceae</taxon>
        <taxon>Escherichia</taxon>
    </lineage>
</organism>
<protein>
    <recommendedName>
        <fullName evidence="1">Succinylglutamate desuccinylase</fullName>
        <ecNumber evidence="1">3.5.1.96</ecNumber>
    </recommendedName>
</protein>
<dbReference type="EC" id="3.5.1.96" evidence="1"/>
<dbReference type="EMBL" id="CP000247">
    <property type="protein sequence ID" value="ABG69693.1"/>
    <property type="molecule type" value="Genomic_DNA"/>
</dbReference>
<dbReference type="RefSeq" id="WP_000368498.1">
    <property type="nucleotide sequence ID" value="NC_008253.1"/>
</dbReference>
<dbReference type="SMR" id="Q0TH86"/>
<dbReference type="KEGG" id="ecp:ECP_1690"/>
<dbReference type="HOGENOM" id="CLU_071608_0_0_6"/>
<dbReference type="UniPathway" id="UPA00185">
    <property type="reaction ID" value="UER00283"/>
</dbReference>
<dbReference type="Proteomes" id="UP000009182">
    <property type="component" value="Chromosome"/>
</dbReference>
<dbReference type="GO" id="GO:0016788">
    <property type="term" value="F:hydrolase activity, acting on ester bonds"/>
    <property type="evidence" value="ECO:0007669"/>
    <property type="project" value="UniProtKB-UniRule"/>
</dbReference>
<dbReference type="GO" id="GO:0009017">
    <property type="term" value="F:succinylglutamate desuccinylase activity"/>
    <property type="evidence" value="ECO:0007669"/>
    <property type="project" value="UniProtKB-EC"/>
</dbReference>
<dbReference type="GO" id="GO:0008270">
    <property type="term" value="F:zinc ion binding"/>
    <property type="evidence" value="ECO:0007669"/>
    <property type="project" value="UniProtKB-UniRule"/>
</dbReference>
<dbReference type="GO" id="GO:0019544">
    <property type="term" value="P:arginine catabolic process to glutamate"/>
    <property type="evidence" value="ECO:0007669"/>
    <property type="project" value="UniProtKB-UniRule"/>
</dbReference>
<dbReference type="GO" id="GO:0019545">
    <property type="term" value="P:arginine catabolic process to succinate"/>
    <property type="evidence" value="ECO:0007669"/>
    <property type="project" value="UniProtKB-UniRule"/>
</dbReference>
<dbReference type="CDD" id="cd03855">
    <property type="entry name" value="M14_ASTE"/>
    <property type="match status" value="1"/>
</dbReference>
<dbReference type="FunFam" id="3.40.630.10:FF:000017">
    <property type="entry name" value="Succinylglutamate desuccinylase"/>
    <property type="match status" value="1"/>
</dbReference>
<dbReference type="Gene3D" id="3.40.630.10">
    <property type="entry name" value="Zn peptidases"/>
    <property type="match status" value="1"/>
</dbReference>
<dbReference type="HAMAP" id="MF_00767">
    <property type="entry name" value="Arg_catab_AstE"/>
    <property type="match status" value="1"/>
</dbReference>
<dbReference type="InterPro" id="IPR050178">
    <property type="entry name" value="AspA/AstE_fam"/>
</dbReference>
<dbReference type="InterPro" id="IPR055438">
    <property type="entry name" value="AstE_AspA_cat"/>
</dbReference>
<dbReference type="InterPro" id="IPR007036">
    <property type="entry name" value="Aste_AspA_hybrid_dom"/>
</dbReference>
<dbReference type="InterPro" id="IPR016681">
    <property type="entry name" value="SuccinylGlu_desuccinylase"/>
</dbReference>
<dbReference type="NCBIfam" id="TIGR03242">
    <property type="entry name" value="arg_catab_astE"/>
    <property type="match status" value="1"/>
</dbReference>
<dbReference type="NCBIfam" id="NF003706">
    <property type="entry name" value="PRK05324.1"/>
    <property type="match status" value="1"/>
</dbReference>
<dbReference type="PANTHER" id="PTHR15162">
    <property type="entry name" value="ASPARTOACYLASE"/>
    <property type="match status" value="1"/>
</dbReference>
<dbReference type="PANTHER" id="PTHR15162:SF7">
    <property type="entry name" value="SUCCINYLGLUTAMATE DESUCCINYLASE"/>
    <property type="match status" value="1"/>
</dbReference>
<dbReference type="Pfam" id="PF24827">
    <property type="entry name" value="AstE_AspA_cat"/>
    <property type="match status" value="1"/>
</dbReference>
<dbReference type="Pfam" id="PF04952">
    <property type="entry name" value="AstE_AspA_hybrid"/>
    <property type="match status" value="1"/>
</dbReference>
<dbReference type="PIRSF" id="PIRSF017020">
    <property type="entry name" value="AstE"/>
    <property type="match status" value="1"/>
</dbReference>
<dbReference type="SUPFAM" id="SSF53187">
    <property type="entry name" value="Zn-dependent exopeptidases"/>
    <property type="match status" value="1"/>
</dbReference>
<sequence>MDNFLALTLTGKKPVITEREINGVRWRWLGDGVLELTPLTPPQGALVISAGIHGNETAPVEMLDALLGAISHGEIPLRWRLLVILGNPPALKQGKRYCHSDMNRMFGGRWQLFAESGETCRARELEQCLEDFYDQGKESVRWHLDLHTAIRGSLHPQFGVLPQRDIPWDEKFLTWLGAAGLEALVFHQDPGGTFTHFSARHFGALACTLELGKALPFGQNDLRQFAVTASAIAALLSGESVGIVRTPPLRYRVVSQITRHSPSFEMHMANDTLNFMPFEKGTLLAQDGEERFTVTHDVEYVLFPNPLVALGLRAGLMLEKIS</sequence>
<evidence type="ECO:0000255" key="1">
    <source>
        <dbReference type="HAMAP-Rule" id="MF_00767"/>
    </source>
</evidence>
<gene>
    <name evidence="1" type="primary">astE</name>
    <name type="ordered locus">ECP_1690</name>
</gene>